<gene>
    <name evidence="2" type="primary">hpnC</name>
    <name evidence="4" type="ordered locus">RPA3743</name>
</gene>
<keyword id="KW-0456">Lyase</keyword>
<sequence length="292" mass="32831">MTSASELRSGKTHRDENFPVASWIIHPRHRDLILAFYNFVRTADDIADHEMLDGDTKLEYLDLLEAELLGRGETQPEAVHLRRALAERGMPPRHALDLLTAFRMDVTKLRYEDWDEVIHYCRYSAMPVGRFMLDVHGESTTTWQASDALCAGLQINNHLQDCGKDYRTLNRVYLPRDVLDAAGAKVEDLGLQKSSPALLKCLQGLAVRTASLLGDGRPLAAEIKDYRLGLEVSVIQAYADRIVRMLQTRDPLSERVHLKPIEFVIASFGAMSSEIVRRSFGKGPVSHPAPRA</sequence>
<feature type="chain" id="PRO_0000441691" description="Hydroxysqualene synthase">
    <location>
        <begin position="1"/>
        <end position="292"/>
    </location>
</feature>
<evidence type="ECO:0000269" key="1">
    <source>
    </source>
</evidence>
<evidence type="ECO:0000303" key="2">
    <source>
    </source>
</evidence>
<evidence type="ECO:0000305" key="3"/>
<evidence type="ECO:0000312" key="4">
    <source>
        <dbReference type="EMBL" id="CAE29184.1"/>
    </source>
</evidence>
<proteinExistence type="evidence at protein level"/>
<accession>Q6N3F1</accession>
<comment type="function">
    <text evidence="1">Involved in the biosynthesis of the hopanoid precursor squalene (SQ) from farnesyl diphosphate (FPP). Catalyzes the second step, the conversion of presqualene diphosphate (PSPP) to hydroxysqualene (HSQ).</text>
</comment>
<comment type="catalytic activity">
    <reaction evidence="1">
        <text>presqualene diphosphate + H2O = hydroxysqualene + diphosphate</text>
        <dbReference type="Rhea" id="RHEA:47984"/>
        <dbReference type="ChEBI" id="CHEBI:15377"/>
        <dbReference type="ChEBI" id="CHEBI:33019"/>
        <dbReference type="ChEBI" id="CHEBI:57310"/>
        <dbReference type="ChEBI" id="CHEBI:88123"/>
        <dbReference type="EC" id="4.2.3.156"/>
    </reaction>
</comment>
<comment type="pathway">
    <text evidence="1">Secondary metabolite biosynthesis; hopanoid biosynthesis.</text>
</comment>
<comment type="similarity">
    <text evidence="3">Belongs to the phytoene/squalene synthase family. HpnC subfamily.</text>
</comment>
<name>HPNC_RHOPA</name>
<organism>
    <name type="scientific">Rhodopseudomonas palustris (strain ATCC BAA-98 / CGA009)</name>
    <dbReference type="NCBI Taxonomy" id="258594"/>
    <lineage>
        <taxon>Bacteria</taxon>
        <taxon>Pseudomonadati</taxon>
        <taxon>Pseudomonadota</taxon>
        <taxon>Alphaproteobacteria</taxon>
        <taxon>Hyphomicrobiales</taxon>
        <taxon>Nitrobacteraceae</taxon>
        <taxon>Rhodopseudomonas</taxon>
    </lineage>
</organism>
<dbReference type="EC" id="4.2.3.156" evidence="1"/>
<dbReference type="EMBL" id="BX572605">
    <property type="protein sequence ID" value="CAE29184.1"/>
    <property type="molecule type" value="Genomic_DNA"/>
</dbReference>
<dbReference type="RefSeq" id="WP_011159281.1">
    <property type="nucleotide sequence ID" value="NZ_CP116810.1"/>
</dbReference>
<dbReference type="SMR" id="Q6N3F1"/>
<dbReference type="STRING" id="258594.RPA3743"/>
<dbReference type="DNASU" id="2691711"/>
<dbReference type="GeneID" id="66894849"/>
<dbReference type="eggNOG" id="COG1562">
    <property type="taxonomic scope" value="Bacteria"/>
</dbReference>
<dbReference type="HOGENOM" id="CLU_037269_0_1_5"/>
<dbReference type="PhylomeDB" id="Q6N3F1"/>
<dbReference type="BioCyc" id="MetaCyc:MONOMER-19571"/>
<dbReference type="BRENDA" id="4.2.3.156">
    <property type="organism ID" value="5412"/>
</dbReference>
<dbReference type="UniPathway" id="UPA00337"/>
<dbReference type="GO" id="GO:0004311">
    <property type="term" value="F:geranylgeranyl diphosphate synthase activity"/>
    <property type="evidence" value="ECO:0007669"/>
    <property type="project" value="InterPro"/>
</dbReference>
<dbReference type="GO" id="GO:0016829">
    <property type="term" value="F:lyase activity"/>
    <property type="evidence" value="ECO:0007669"/>
    <property type="project" value="UniProtKB-KW"/>
</dbReference>
<dbReference type="GO" id="GO:0051996">
    <property type="term" value="F:squalene synthase [NAD(P)H] activity"/>
    <property type="evidence" value="ECO:0007669"/>
    <property type="project" value="InterPro"/>
</dbReference>
<dbReference type="GO" id="GO:0016114">
    <property type="term" value="P:terpenoid biosynthetic process"/>
    <property type="evidence" value="ECO:0007669"/>
    <property type="project" value="UniProtKB-ARBA"/>
</dbReference>
<dbReference type="CDD" id="cd00683">
    <property type="entry name" value="Trans_IPPS_HH"/>
    <property type="match status" value="1"/>
</dbReference>
<dbReference type="Gene3D" id="1.10.600.10">
    <property type="entry name" value="Farnesyl Diphosphate Synthase"/>
    <property type="match status" value="1"/>
</dbReference>
<dbReference type="InterPro" id="IPR017827">
    <property type="entry name" value="HSQ_synthase_HpnC"/>
</dbReference>
<dbReference type="InterPro" id="IPR008949">
    <property type="entry name" value="Isoprenoid_synthase_dom_sf"/>
</dbReference>
<dbReference type="InterPro" id="IPR002060">
    <property type="entry name" value="Squ/phyt_synthse"/>
</dbReference>
<dbReference type="InterPro" id="IPR044843">
    <property type="entry name" value="Trans_IPPS_bact-type"/>
</dbReference>
<dbReference type="InterPro" id="IPR033904">
    <property type="entry name" value="Trans_IPPS_HH"/>
</dbReference>
<dbReference type="NCBIfam" id="TIGR03464">
    <property type="entry name" value="HpnC"/>
    <property type="match status" value="1"/>
</dbReference>
<dbReference type="PANTHER" id="PTHR31480">
    <property type="entry name" value="BIFUNCTIONAL LYCOPENE CYCLASE/PHYTOENE SYNTHASE"/>
    <property type="match status" value="1"/>
</dbReference>
<dbReference type="Pfam" id="PF00494">
    <property type="entry name" value="SQS_PSY"/>
    <property type="match status" value="1"/>
</dbReference>
<dbReference type="SFLD" id="SFLDS00005">
    <property type="entry name" value="Isoprenoid_Synthase_Type_I"/>
    <property type="match status" value="1"/>
</dbReference>
<dbReference type="SFLD" id="SFLDG01212">
    <property type="entry name" value="Phytoene_synthase_like"/>
    <property type="match status" value="1"/>
</dbReference>
<dbReference type="SUPFAM" id="SSF48576">
    <property type="entry name" value="Terpenoid synthases"/>
    <property type="match status" value="1"/>
</dbReference>
<reference key="1">
    <citation type="journal article" date="2004" name="Nat. Biotechnol.">
        <title>Complete genome sequence of the metabolically versatile photosynthetic bacterium Rhodopseudomonas palustris.</title>
        <authorList>
            <person name="Larimer F.W."/>
            <person name="Chain P."/>
            <person name="Hauser L."/>
            <person name="Lamerdin J.E."/>
            <person name="Malfatti S."/>
            <person name="Do L."/>
            <person name="Land M.L."/>
            <person name="Pelletier D.A."/>
            <person name="Beatty J.T."/>
            <person name="Lang A.S."/>
            <person name="Tabita F.R."/>
            <person name="Gibson J.L."/>
            <person name="Hanson T.E."/>
            <person name="Bobst C."/>
            <person name="Torres y Torres J.L."/>
            <person name="Peres C."/>
            <person name="Harrison F.H."/>
            <person name="Gibson J."/>
            <person name="Harwood C.S."/>
        </authorList>
    </citation>
    <scope>NUCLEOTIDE SEQUENCE [LARGE SCALE GENOMIC DNA]</scope>
    <source>
        <strain>ATCC BAA-98 / CGA009</strain>
    </source>
</reference>
<reference key="2">
    <citation type="journal article" date="2015" name="ACS Cent. Sci.">
        <title>Biosynthesis of squalene from farnesyl diphosphate in bacteria: three steps catalyzed by three enzymes.</title>
        <authorList>
            <person name="Pan J.J."/>
            <person name="Solbiati J.O."/>
            <person name="Ramamoorthy G."/>
            <person name="Hillerich B.S."/>
            <person name="Seidel R.D."/>
            <person name="Cronan J.E."/>
            <person name="Almo S.C."/>
            <person name="Poulter C.D."/>
        </authorList>
    </citation>
    <scope>FUNCTION</scope>
    <scope>CATALYTIC ACTIVITY</scope>
    <scope>PATHWAY</scope>
    <source>
        <strain>ATCC BAA-98 / CGA009</strain>
    </source>
</reference>
<protein>
    <recommendedName>
        <fullName evidence="2">Hydroxysqualene synthase</fullName>
        <shortName evidence="2">HSQ synthase</shortName>
        <shortName evidence="2">HSQase</shortName>
        <ecNumber evidence="1">4.2.3.156</ecNumber>
    </recommendedName>
</protein>